<organism>
    <name type="scientific">Bradyrhizobium sp. (strain BTAi1 / ATCC BAA-1182)</name>
    <dbReference type="NCBI Taxonomy" id="288000"/>
    <lineage>
        <taxon>Bacteria</taxon>
        <taxon>Pseudomonadati</taxon>
        <taxon>Pseudomonadota</taxon>
        <taxon>Alphaproteobacteria</taxon>
        <taxon>Hyphomicrobiales</taxon>
        <taxon>Nitrobacteraceae</taxon>
        <taxon>Bradyrhizobium</taxon>
    </lineage>
</organism>
<keyword id="KW-0414">Isoprene biosynthesis</keyword>
<keyword id="KW-0460">Magnesium</keyword>
<keyword id="KW-0479">Metal-binding</keyword>
<keyword id="KW-1185">Reference proteome</keyword>
<keyword id="KW-0784">Thiamine biosynthesis</keyword>
<keyword id="KW-0786">Thiamine pyrophosphate</keyword>
<keyword id="KW-0808">Transferase</keyword>
<sequence length="641" mass="69047">MTTFSKTPLLDTIKTPEDLRRLKVEQVRQVADELRQETIDAVSVTGGHFGAGLGVVELTTAIHYVFDTPRDRLIWDVGHQAYPHKILTGRRDRIRTLRTGGGLSGFTKRTESDYDPFGAAHSSTSISAGLGMAVARDLSGGKNNVIAVIGDGAMSAGMAYEAMNNAGAMNSRLIVILNDNDMSIAPPVGAMSAYLSRLYSGKTYRTLRDAAKQLGQHLPKVIANRASRVEEYSRGFMMDGGTLFEELGFYYVGPIDGHNLDHLLPVLKNVRDMETGPILVHVVTQKGKGYPPAEASADKYHAVVKFDVATGTQAKAKPNAPAYQNVFGQSLVKEAEKDDKVVGITAAMPSGTGIDIFAKAFPKRTFDVGIAEQHAVTFAAGLAAEGFKPFCAIYSTFLQRGYDQIVHDVCIQSLPVRFAIDRAGLVGADGATHAGSFDNAYLGCLPNMVIMAASDEAELVHMVATQVAINDRPSSVRYPRGEGRGVEMPEVGVPLPIGKGRMIRQGKQVALLSFGTRLAECEKAADELAAHGLSASIADARFMKPLDEELVLKLAREHEILITIEEGSIGGFGSHVMQYLADQGMLDGGLKMRSMVLPDEFQDHDTPAAMYARAGLDAKGIVRKVFEALGKDYTAEVVKLA</sequence>
<dbReference type="EC" id="2.2.1.7" evidence="1"/>
<dbReference type="EMBL" id="CP000494">
    <property type="protein sequence ID" value="ABQ34644.1"/>
    <property type="molecule type" value="Genomic_DNA"/>
</dbReference>
<dbReference type="RefSeq" id="WP_012042672.1">
    <property type="nucleotide sequence ID" value="NC_009485.1"/>
</dbReference>
<dbReference type="SMR" id="A5EEQ0"/>
<dbReference type="STRING" id="288000.BBta_2479"/>
<dbReference type="KEGG" id="bbt:BBta_2479"/>
<dbReference type="eggNOG" id="COG1154">
    <property type="taxonomic scope" value="Bacteria"/>
</dbReference>
<dbReference type="HOGENOM" id="CLU_009227_1_4_5"/>
<dbReference type="OrthoDB" id="9803371at2"/>
<dbReference type="UniPathway" id="UPA00064">
    <property type="reaction ID" value="UER00091"/>
</dbReference>
<dbReference type="Proteomes" id="UP000000246">
    <property type="component" value="Chromosome"/>
</dbReference>
<dbReference type="GO" id="GO:0008661">
    <property type="term" value="F:1-deoxy-D-xylulose-5-phosphate synthase activity"/>
    <property type="evidence" value="ECO:0007669"/>
    <property type="project" value="UniProtKB-UniRule"/>
</dbReference>
<dbReference type="GO" id="GO:0000287">
    <property type="term" value="F:magnesium ion binding"/>
    <property type="evidence" value="ECO:0007669"/>
    <property type="project" value="UniProtKB-UniRule"/>
</dbReference>
<dbReference type="GO" id="GO:0030976">
    <property type="term" value="F:thiamine pyrophosphate binding"/>
    <property type="evidence" value="ECO:0007669"/>
    <property type="project" value="UniProtKB-UniRule"/>
</dbReference>
<dbReference type="GO" id="GO:0052865">
    <property type="term" value="P:1-deoxy-D-xylulose 5-phosphate biosynthetic process"/>
    <property type="evidence" value="ECO:0007669"/>
    <property type="project" value="UniProtKB-UniPathway"/>
</dbReference>
<dbReference type="GO" id="GO:0019682">
    <property type="term" value="P:glyceraldehyde-3-phosphate metabolic process"/>
    <property type="evidence" value="ECO:0007669"/>
    <property type="project" value="UniProtKB-ARBA"/>
</dbReference>
<dbReference type="GO" id="GO:0016114">
    <property type="term" value="P:terpenoid biosynthetic process"/>
    <property type="evidence" value="ECO:0007669"/>
    <property type="project" value="UniProtKB-UniRule"/>
</dbReference>
<dbReference type="GO" id="GO:0009228">
    <property type="term" value="P:thiamine biosynthetic process"/>
    <property type="evidence" value="ECO:0007669"/>
    <property type="project" value="UniProtKB-UniRule"/>
</dbReference>
<dbReference type="CDD" id="cd02007">
    <property type="entry name" value="TPP_DXS"/>
    <property type="match status" value="1"/>
</dbReference>
<dbReference type="CDD" id="cd07033">
    <property type="entry name" value="TPP_PYR_DXS_TK_like"/>
    <property type="match status" value="1"/>
</dbReference>
<dbReference type="FunFam" id="3.40.50.920:FF:000002">
    <property type="entry name" value="1-deoxy-D-xylulose-5-phosphate synthase"/>
    <property type="match status" value="1"/>
</dbReference>
<dbReference type="FunFam" id="3.40.50.970:FF:000005">
    <property type="entry name" value="1-deoxy-D-xylulose-5-phosphate synthase"/>
    <property type="match status" value="1"/>
</dbReference>
<dbReference type="Gene3D" id="3.40.50.920">
    <property type="match status" value="1"/>
</dbReference>
<dbReference type="Gene3D" id="3.40.50.970">
    <property type="match status" value="2"/>
</dbReference>
<dbReference type="HAMAP" id="MF_00315">
    <property type="entry name" value="DXP_synth"/>
    <property type="match status" value="1"/>
</dbReference>
<dbReference type="InterPro" id="IPR005477">
    <property type="entry name" value="Dxylulose-5-P_synthase"/>
</dbReference>
<dbReference type="InterPro" id="IPR029061">
    <property type="entry name" value="THDP-binding"/>
</dbReference>
<dbReference type="InterPro" id="IPR009014">
    <property type="entry name" value="Transketo_C/PFOR_II"/>
</dbReference>
<dbReference type="InterPro" id="IPR005475">
    <property type="entry name" value="Transketolase-like_Pyr-bd"/>
</dbReference>
<dbReference type="InterPro" id="IPR020826">
    <property type="entry name" value="Transketolase_BS"/>
</dbReference>
<dbReference type="InterPro" id="IPR033248">
    <property type="entry name" value="Transketolase_C"/>
</dbReference>
<dbReference type="InterPro" id="IPR049557">
    <property type="entry name" value="Transketolase_CS"/>
</dbReference>
<dbReference type="NCBIfam" id="TIGR00204">
    <property type="entry name" value="dxs"/>
    <property type="match status" value="1"/>
</dbReference>
<dbReference type="NCBIfam" id="NF003933">
    <property type="entry name" value="PRK05444.2-2"/>
    <property type="match status" value="1"/>
</dbReference>
<dbReference type="PANTHER" id="PTHR43322">
    <property type="entry name" value="1-D-DEOXYXYLULOSE 5-PHOSPHATE SYNTHASE-RELATED"/>
    <property type="match status" value="1"/>
</dbReference>
<dbReference type="PANTHER" id="PTHR43322:SF5">
    <property type="entry name" value="1-DEOXY-D-XYLULOSE-5-PHOSPHATE SYNTHASE, CHLOROPLASTIC"/>
    <property type="match status" value="1"/>
</dbReference>
<dbReference type="Pfam" id="PF13292">
    <property type="entry name" value="DXP_synthase_N"/>
    <property type="match status" value="1"/>
</dbReference>
<dbReference type="Pfam" id="PF02779">
    <property type="entry name" value="Transket_pyr"/>
    <property type="match status" value="1"/>
</dbReference>
<dbReference type="Pfam" id="PF02780">
    <property type="entry name" value="Transketolase_C"/>
    <property type="match status" value="1"/>
</dbReference>
<dbReference type="SMART" id="SM00861">
    <property type="entry name" value="Transket_pyr"/>
    <property type="match status" value="1"/>
</dbReference>
<dbReference type="SUPFAM" id="SSF52518">
    <property type="entry name" value="Thiamin diphosphate-binding fold (THDP-binding)"/>
    <property type="match status" value="2"/>
</dbReference>
<dbReference type="SUPFAM" id="SSF52922">
    <property type="entry name" value="TK C-terminal domain-like"/>
    <property type="match status" value="1"/>
</dbReference>
<dbReference type="PROSITE" id="PS00801">
    <property type="entry name" value="TRANSKETOLASE_1"/>
    <property type="match status" value="1"/>
</dbReference>
<dbReference type="PROSITE" id="PS00802">
    <property type="entry name" value="TRANSKETOLASE_2"/>
    <property type="match status" value="1"/>
</dbReference>
<comment type="function">
    <text evidence="1">Catalyzes the acyloin condensation reaction between C atoms 2 and 3 of pyruvate and glyceraldehyde 3-phosphate to yield 1-deoxy-D-xylulose-5-phosphate (DXP).</text>
</comment>
<comment type="catalytic activity">
    <reaction evidence="1">
        <text>D-glyceraldehyde 3-phosphate + pyruvate + H(+) = 1-deoxy-D-xylulose 5-phosphate + CO2</text>
        <dbReference type="Rhea" id="RHEA:12605"/>
        <dbReference type="ChEBI" id="CHEBI:15361"/>
        <dbReference type="ChEBI" id="CHEBI:15378"/>
        <dbReference type="ChEBI" id="CHEBI:16526"/>
        <dbReference type="ChEBI" id="CHEBI:57792"/>
        <dbReference type="ChEBI" id="CHEBI:59776"/>
        <dbReference type="EC" id="2.2.1.7"/>
    </reaction>
</comment>
<comment type="cofactor">
    <cofactor evidence="1">
        <name>Mg(2+)</name>
        <dbReference type="ChEBI" id="CHEBI:18420"/>
    </cofactor>
    <text evidence="1">Binds 1 Mg(2+) ion per subunit.</text>
</comment>
<comment type="cofactor">
    <cofactor evidence="1">
        <name>thiamine diphosphate</name>
        <dbReference type="ChEBI" id="CHEBI:58937"/>
    </cofactor>
    <text evidence="1">Binds 1 thiamine pyrophosphate per subunit.</text>
</comment>
<comment type="pathway">
    <text evidence="1">Metabolic intermediate biosynthesis; 1-deoxy-D-xylulose 5-phosphate biosynthesis; 1-deoxy-D-xylulose 5-phosphate from D-glyceraldehyde 3-phosphate and pyruvate: step 1/1.</text>
</comment>
<comment type="subunit">
    <text evidence="1">Homodimer.</text>
</comment>
<comment type="similarity">
    <text evidence="1">Belongs to the transketolase family. DXPS subfamily.</text>
</comment>
<protein>
    <recommendedName>
        <fullName evidence="1">1-deoxy-D-xylulose-5-phosphate synthase</fullName>
        <ecNumber evidence="1">2.2.1.7</ecNumber>
    </recommendedName>
    <alternativeName>
        <fullName evidence="1">1-deoxyxylulose-5-phosphate synthase</fullName>
        <shortName evidence="1">DXP synthase</shortName>
        <shortName evidence="1">DXPS</shortName>
    </alternativeName>
</protein>
<proteinExistence type="inferred from homology"/>
<reference key="1">
    <citation type="journal article" date="2007" name="Science">
        <title>Legumes symbioses: absence of nod genes in photosynthetic bradyrhizobia.</title>
        <authorList>
            <person name="Giraud E."/>
            <person name="Moulin L."/>
            <person name="Vallenet D."/>
            <person name="Barbe V."/>
            <person name="Cytryn E."/>
            <person name="Avarre J.-C."/>
            <person name="Jaubert M."/>
            <person name="Simon D."/>
            <person name="Cartieaux F."/>
            <person name="Prin Y."/>
            <person name="Bena G."/>
            <person name="Hannibal L."/>
            <person name="Fardoux J."/>
            <person name="Kojadinovic M."/>
            <person name="Vuillet L."/>
            <person name="Lajus A."/>
            <person name="Cruveiller S."/>
            <person name="Rouy Z."/>
            <person name="Mangenot S."/>
            <person name="Segurens B."/>
            <person name="Dossat C."/>
            <person name="Franck W.L."/>
            <person name="Chang W.-S."/>
            <person name="Saunders E."/>
            <person name="Bruce D."/>
            <person name="Richardson P."/>
            <person name="Normand P."/>
            <person name="Dreyfus B."/>
            <person name="Pignol D."/>
            <person name="Stacey G."/>
            <person name="Emerich D."/>
            <person name="Vermeglio A."/>
            <person name="Medigue C."/>
            <person name="Sadowsky M."/>
        </authorList>
    </citation>
    <scope>NUCLEOTIDE SEQUENCE [LARGE SCALE GENOMIC DNA]</scope>
    <source>
        <strain>BTAi1 / ATCC BAA-1182</strain>
    </source>
</reference>
<accession>A5EEQ0</accession>
<name>DXS_BRASB</name>
<evidence type="ECO:0000255" key="1">
    <source>
        <dbReference type="HAMAP-Rule" id="MF_00315"/>
    </source>
</evidence>
<gene>
    <name evidence="1" type="primary">dxs</name>
    <name type="ordered locus">BBta_2479</name>
</gene>
<feature type="chain" id="PRO_1000205065" description="1-deoxy-D-xylulose-5-phosphate synthase">
    <location>
        <begin position="1"/>
        <end position="641"/>
    </location>
</feature>
<feature type="binding site" evidence="1">
    <location>
        <position position="79"/>
    </location>
    <ligand>
        <name>thiamine diphosphate</name>
        <dbReference type="ChEBI" id="CHEBI:58937"/>
    </ligand>
</feature>
<feature type="binding site" evidence="1">
    <location>
        <begin position="120"/>
        <end position="122"/>
    </location>
    <ligand>
        <name>thiamine diphosphate</name>
        <dbReference type="ChEBI" id="CHEBI:58937"/>
    </ligand>
</feature>
<feature type="binding site" evidence="1">
    <location>
        <position position="151"/>
    </location>
    <ligand>
        <name>Mg(2+)</name>
        <dbReference type="ChEBI" id="CHEBI:18420"/>
    </ligand>
</feature>
<feature type="binding site" evidence="1">
    <location>
        <begin position="152"/>
        <end position="153"/>
    </location>
    <ligand>
        <name>thiamine diphosphate</name>
        <dbReference type="ChEBI" id="CHEBI:58937"/>
    </ligand>
</feature>
<feature type="binding site" evidence="1">
    <location>
        <position position="180"/>
    </location>
    <ligand>
        <name>Mg(2+)</name>
        <dbReference type="ChEBI" id="CHEBI:18420"/>
    </ligand>
</feature>
<feature type="binding site" evidence="1">
    <location>
        <position position="180"/>
    </location>
    <ligand>
        <name>thiamine diphosphate</name>
        <dbReference type="ChEBI" id="CHEBI:58937"/>
    </ligand>
</feature>
<feature type="binding site" evidence="1">
    <location>
        <position position="290"/>
    </location>
    <ligand>
        <name>thiamine diphosphate</name>
        <dbReference type="ChEBI" id="CHEBI:58937"/>
    </ligand>
</feature>
<feature type="binding site" evidence="1">
    <location>
        <position position="372"/>
    </location>
    <ligand>
        <name>thiamine diphosphate</name>
        <dbReference type="ChEBI" id="CHEBI:58937"/>
    </ligand>
</feature>